<sequence>MSSVTIERIETCLVDLPTIRPHKLSVATMYGQTLMLVKVYCTDGAVGIGEGTTIAGMAYGPESPEAMKLAIDAYFAPALVGKDATRIQTLMAHLGKLVKINHFAKSALETALLDAHGKRLGVAVSELLGGRRRERLPVAWTLASGDTSRDIAEAEQMIEVRRHNVFKLKIGAKELKTDIKHVAEIKRVVGEHAAVRVDVNMAWSETQAAWAIPALADAGCELVEQPVASAAALARLMRRFPVALMADEILQGPDNAFEIARVNGADVFAIKIEQSGGLFAAQRVAAIADAAGIELYGGTMLEGAFSTVASAHLFASFANLQWGTELFGPLLITEEILTKPLDYSDYQLTVPDGPGLGIELDEEKVRRFTRDGLIKVTKA</sequence>
<reference key="1">
    <citation type="journal article" date="1998" name="Biochem. Biophys. Res. Commun.">
        <title>Organization and transcriptional characterization of the cat1 gene cluster in Acinetobacter lwoffi K24.</title>
        <authorList>
            <person name="Kim S.I."/>
            <person name="Leem S.-H."/>
            <person name="Choi J.-S."/>
            <person name="Ha K.-S."/>
        </authorList>
    </citation>
    <scope>NUCLEOTIDE SEQUENCE [GENOMIC DNA]</scope>
    <source>
        <strain>K24</strain>
    </source>
</reference>
<reference key="2">
    <citation type="journal article" date="1997" name="J. Bacteriol.">
        <title>Cloning and characterization of two catA genes in Acinetobacter lwoffii K24.</title>
        <authorList>
            <person name="Kim S.I."/>
            <person name="Leem S.-H."/>
            <person name="Choi J.-S."/>
            <person name="Chung Y.H."/>
            <person name="Kim S."/>
            <person name="Park Y.-M."/>
            <person name="Park Y.K."/>
            <person name="Lee Y.N."/>
            <person name="Ha K.-S."/>
        </authorList>
    </citation>
    <scope>NUCLEOTIDE SEQUENCE [GENOMIC DNA] OF 273-379</scope>
    <source>
        <strain>K24</strain>
    </source>
</reference>
<comment type="function">
    <text>Catalyzes a syn cycloisomerization.</text>
</comment>
<comment type="catalytic activity">
    <reaction evidence="2">
        <text>(S)-muconolactone = cis,cis-muconate + H(+)</text>
        <dbReference type="Rhea" id="RHEA:30031"/>
        <dbReference type="ChEBI" id="CHEBI:15378"/>
        <dbReference type="ChEBI" id="CHEBI:32379"/>
        <dbReference type="ChEBI" id="CHEBI:58736"/>
        <dbReference type="EC" id="5.5.1.1"/>
    </reaction>
</comment>
<comment type="cofactor">
    <cofactor evidence="1">
        <name>Mn(2+)</name>
        <dbReference type="ChEBI" id="CHEBI:29035"/>
    </cofactor>
</comment>
<comment type="pathway">
    <text>Aromatic compound metabolism; beta-ketoadipate pathway; 5-oxo-4,5-dihydro-2-furylacetate from catechol: step 2/3.</text>
</comment>
<comment type="subunit">
    <text evidence="1">Homooctamer.</text>
</comment>
<comment type="similarity">
    <text evidence="3">Belongs to the mandelate racemase/muconate lactonizing enzyme family.</text>
</comment>
<keyword id="KW-0058">Aromatic hydrocarbons catabolism</keyword>
<keyword id="KW-0413">Isomerase</keyword>
<keyword id="KW-0464">Manganese</keyword>
<keyword id="KW-0479">Metal-binding</keyword>
<protein>
    <recommendedName>
        <fullName>Muconate cycloisomerase 1-1</fullName>
        <ecNumber evidence="2">5.5.1.1</ecNumber>
    </recommendedName>
    <alternativeName>
        <fullName>Cis,cis-muconate lactonizing enzyme I 1</fullName>
        <shortName>MLE 1</shortName>
    </alternativeName>
    <alternativeName>
        <fullName>Muconate cycloisomerase I 1</fullName>
    </alternativeName>
</protein>
<dbReference type="EC" id="5.5.1.1" evidence="2"/>
<dbReference type="EMBL" id="U77658">
    <property type="protein sequence ID" value="AAC46226.1"/>
    <property type="molecule type" value="Genomic_DNA"/>
</dbReference>
<dbReference type="PIR" id="JC5944">
    <property type="entry name" value="JC5944"/>
</dbReference>
<dbReference type="SMR" id="O33946"/>
<dbReference type="UniPathway" id="UPA00157">
    <property type="reaction ID" value="UER00259"/>
</dbReference>
<dbReference type="GO" id="GO:0018850">
    <property type="term" value="F:chloromuconate cycloisomerase activity"/>
    <property type="evidence" value="ECO:0007669"/>
    <property type="project" value="InterPro"/>
</dbReference>
<dbReference type="GO" id="GO:0030145">
    <property type="term" value="F:manganese ion binding"/>
    <property type="evidence" value="ECO:0007669"/>
    <property type="project" value="InterPro"/>
</dbReference>
<dbReference type="GO" id="GO:0018849">
    <property type="term" value="F:muconate cycloisomerase activity"/>
    <property type="evidence" value="ECO:0007669"/>
    <property type="project" value="UniProtKB-EC"/>
</dbReference>
<dbReference type="GO" id="GO:0009063">
    <property type="term" value="P:amino acid catabolic process"/>
    <property type="evidence" value="ECO:0007669"/>
    <property type="project" value="InterPro"/>
</dbReference>
<dbReference type="GO" id="GO:0042952">
    <property type="term" value="P:beta-ketoadipate pathway"/>
    <property type="evidence" value="ECO:0007669"/>
    <property type="project" value="UniProtKB-UniPathway"/>
</dbReference>
<dbReference type="CDD" id="cd03318">
    <property type="entry name" value="MLE"/>
    <property type="match status" value="1"/>
</dbReference>
<dbReference type="Gene3D" id="3.20.20.120">
    <property type="entry name" value="Enolase-like C-terminal domain"/>
    <property type="match status" value="1"/>
</dbReference>
<dbReference type="Gene3D" id="3.30.390.10">
    <property type="entry name" value="Enolase-like, N-terminal domain"/>
    <property type="match status" value="1"/>
</dbReference>
<dbReference type="InterPro" id="IPR013370">
    <property type="entry name" value="Chloromuconate_cycloisomerase"/>
</dbReference>
<dbReference type="InterPro" id="IPR036849">
    <property type="entry name" value="Enolase-like_C_sf"/>
</dbReference>
<dbReference type="InterPro" id="IPR029017">
    <property type="entry name" value="Enolase-like_N"/>
</dbReference>
<dbReference type="InterPro" id="IPR029065">
    <property type="entry name" value="Enolase_C-like"/>
</dbReference>
<dbReference type="InterPro" id="IPR018110">
    <property type="entry name" value="Mandel_Rmase/mucon_lact_enz_CS"/>
</dbReference>
<dbReference type="InterPro" id="IPR013342">
    <property type="entry name" value="Mandelate_racemase_C"/>
</dbReference>
<dbReference type="InterPro" id="IPR013341">
    <property type="entry name" value="Mandelate_racemase_N_dom"/>
</dbReference>
<dbReference type="NCBIfam" id="TIGR02534">
    <property type="entry name" value="mucon_cyclo"/>
    <property type="match status" value="1"/>
</dbReference>
<dbReference type="PANTHER" id="PTHR48073:SF2">
    <property type="entry name" value="O-SUCCINYLBENZOATE SYNTHASE"/>
    <property type="match status" value="1"/>
</dbReference>
<dbReference type="PANTHER" id="PTHR48073">
    <property type="entry name" value="O-SUCCINYLBENZOATE SYNTHASE-RELATED"/>
    <property type="match status" value="1"/>
</dbReference>
<dbReference type="Pfam" id="PF13378">
    <property type="entry name" value="MR_MLE_C"/>
    <property type="match status" value="1"/>
</dbReference>
<dbReference type="Pfam" id="PF02746">
    <property type="entry name" value="MR_MLE_N"/>
    <property type="match status" value="1"/>
</dbReference>
<dbReference type="SFLD" id="SFLDG01258">
    <property type="entry name" value="(chloro)muconate_cycloisomeras"/>
    <property type="match status" value="1"/>
</dbReference>
<dbReference type="SFLD" id="SFLDS00001">
    <property type="entry name" value="Enolase"/>
    <property type="match status" value="1"/>
</dbReference>
<dbReference type="SMART" id="SM00922">
    <property type="entry name" value="MR_MLE"/>
    <property type="match status" value="1"/>
</dbReference>
<dbReference type="SUPFAM" id="SSF51604">
    <property type="entry name" value="Enolase C-terminal domain-like"/>
    <property type="match status" value="1"/>
</dbReference>
<dbReference type="SUPFAM" id="SSF54826">
    <property type="entry name" value="Enolase N-terminal domain-like"/>
    <property type="match status" value="1"/>
</dbReference>
<dbReference type="PROSITE" id="PS00908">
    <property type="entry name" value="MR_MLE_1"/>
    <property type="match status" value="1"/>
</dbReference>
<dbReference type="PROSITE" id="PS00909">
    <property type="entry name" value="MR_MLE_2"/>
    <property type="match status" value="1"/>
</dbReference>
<evidence type="ECO:0000250" key="1"/>
<evidence type="ECO:0000250" key="2">
    <source>
        <dbReference type="UniProtKB" id="P08310"/>
    </source>
</evidence>
<evidence type="ECO:0000305" key="3"/>
<accession>O33946</accession>
<gene>
    <name type="primary">catB1</name>
</gene>
<feature type="chain" id="PRO_0000171249" description="Muconate cycloisomerase 1-1">
    <location>
        <begin position="1"/>
        <end position="379"/>
    </location>
</feature>
<feature type="active site" evidence="1">
    <location>
        <position position="169"/>
    </location>
</feature>
<feature type="binding site" evidence="1">
    <location>
        <position position="198"/>
    </location>
    <ligand>
        <name>Mn(2+)</name>
        <dbReference type="ChEBI" id="CHEBI:29035"/>
    </ligand>
</feature>
<feature type="binding site" evidence="1">
    <location>
        <position position="224"/>
    </location>
    <ligand>
        <name>Mn(2+)</name>
        <dbReference type="ChEBI" id="CHEBI:29035"/>
    </ligand>
</feature>
<feature type="binding site" evidence="1">
    <location>
        <position position="247"/>
    </location>
    <ligand>
        <name>Mn(2+)</name>
        <dbReference type="ChEBI" id="CHEBI:29035"/>
    </ligand>
</feature>
<name>CATB1_ACILW</name>
<organism>
    <name type="scientific">Acinetobacter lwoffii</name>
    <dbReference type="NCBI Taxonomy" id="28090"/>
    <lineage>
        <taxon>Bacteria</taxon>
        <taxon>Pseudomonadati</taxon>
        <taxon>Pseudomonadota</taxon>
        <taxon>Gammaproteobacteria</taxon>
        <taxon>Moraxellales</taxon>
        <taxon>Moraxellaceae</taxon>
        <taxon>Acinetobacter</taxon>
    </lineage>
</organism>
<proteinExistence type="inferred from homology"/>